<proteinExistence type="inferred from homology"/>
<sequence>MRKLALVPIRFYRYAISPLMASHCRFYPSCSCYAYEAIENHGLLRGGWLTFRRLGRCHPWNPGGYDPVPPIPTSRSSSMAE</sequence>
<keyword id="KW-0997">Cell inner membrane</keyword>
<keyword id="KW-1003">Cell membrane</keyword>
<keyword id="KW-0472">Membrane</keyword>
<accession>Q3K427</accession>
<name>YIDD_PSEPF</name>
<protein>
    <recommendedName>
        <fullName evidence="1">Putative membrane protein insertion efficiency factor</fullName>
    </recommendedName>
</protein>
<evidence type="ECO:0000255" key="1">
    <source>
        <dbReference type="HAMAP-Rule" id="MF_00386"/>
    </source>
</evidence>
<evidence type="ECO:0000256" key="2">
    <source>
        <dbReference type="SAM" id="MobiDB-lite"/>
    </source>
</evidence>
<gene>
    <name type="ordered locus">Pfl01_5744</name>
</gene>
<reference key="1">
    <citation type="journal article" date="2009" name="Genome Biol.">
        <title>Genomic and genetic analyses of diversity and plant interactions of Pseudomonas fluorescens.</title>
        <authorList>
            <person name="Silby M.W."/>
            <person name="Cerdeno-Tarraga A.M."/>
            <person name="Vernikos G.S."/>
            <person name="Giddens S.R."/>
            <person name="Jackson R.W."/>
            <person name="Preston G.M."/>
            <person name="Zhang X.-X."/>
            <person name="Moon C.D."/>
            <person name="Gehrig S.M."/>
            <person name="Godfrey S.A.C."/>
            <person name="Knight C.G."/>
            <person name="Malone J.G."/>
            <person name="Robinson Z."/>
            <person name="Spiers A.J."/>
            <person name="Harris S."/>
            <person name="Challis G.L."/>
            <person name="Yaxley A.M."/>
            <person name="Harris D."/>
            <person name="Seeger K."/>
            <person name="Murphy L."/>
            <person name="Rutter S."/>
            <person name="Squares R."/>
            <person name="Quail M.A."/>
            <person name="Saunders E."/>
            <person name="Mavromatis K."/>
            <person name="Brettin T.S."/>
            <person name="Bentley S.D."/>
            <person name="Hothersall J."/>
            <person name="Stephens E."/>
            <person name="Thomas C.M."/>
            <person name="Parkhill J."/>
            <person name="Levy S.B."/>
            <person name="Rainey P.B."/>
            <person name="Thomson N.R."/>
        </authorList>
    </citation>
    <scope>NUCLEOTIDE SEQUENCE [LARGE SCALE GENOMIC DNA]</scope>
    <source>
        <strain>Pf0-1</strain>
    </source>
</reference>
<organism>
    <name type="scientific">Pseudomonas fluorescens (strain Pf0-1)</name>
    <dbReference type="NCBI Taxonomy" id="205922"/>
    <lineage>
        <taxon>Bacteria</taxon>
        <taxon>Pseudomonadati</taxon>
        <taxon>Pseudomonadota</taxon>
        <taxon>Gammaproteobacteria</taxon>
        <taxon>Pseudomonadales</taxon>
        <taxon>Pseudomonadaceae</taxon>
        <taxon>Pseudomonas</taxon>
    </lineage>
</organism>
<feature type="chain" id="PRO_0000253144" description="Putative membrane protein insertion efficiency factor">
    <location>
        <begin position="1"/>
        <end position="81"/>
    </location>
</feature>
<feature type="region of interest" description="Disordered" evidence="2">
    <location>
        <begin position="61"/>
        <end position="81"/>
    </location>
</feature>
<dbReference type="EMBL" id="CP000094">
    <property type="protein sequence ID" value="ABA77477.1"/>
    <property type="molecule type" value="Genomic_DNA"/>
</dbReference>
<dbReference type="RefSeq" id="WP_011336725.1">
    <property type="nucleotide sequence ID" value="NC_007492.2"/>
</dbReference>
<dbReference type="KEGG" id="pfo:Pfl01_5744"/>
<dbReference type="eggNOG" id="COG0759">
    <property type="taxonomic scope" value="Bacteria"/>
</dbReference>
<dbReference type="HOGENOM" id="CLU_144811_6_1_6"/>
<dbReference type="Proteomes" id="UP000002704">
    <property type="component" value="Chromosome"/>
</dbReference>
<dbReference type="GO" id="GO:0005886">
    <property type="term" value="C:plasma membrane"/>
    <property type="evidence" value="ECO:0007669"/>
    <property type="project" value="UniProtKB-SubCell"/>
</dbReference>
<dbReference type="HAMAP" id="MF_00386">
    <property type="entry name" value="UPF0161_YidD"/>
    <property type="match status" value="1"/>
</dbReference>
<dbReference type="InterPro" id="IPR002696">
    <property type="entry name" value="Membr_insert_effic_factor_YidD"/>
</dbReference>
<dbReference type="NCBIfam" id="TIGR00278">
    <property type="entry name" value="membrane protein insertion efficiency factor YidD"/>
    <property type="match status" value="1"/>
</dbReference>
<dbReference type="PANTHER" id="PTHR33383">
    <property type="entry name" value="MEMBRANE PROTEIN INSERTION EFFICIENCY FACTOR-RELATED"/>
    <property type="match status" value="1"/>
</dbReference>
<dbReference type="PANTHER" id="PTHR33383:SF1">
    <property type="entry name" value="MEMBRANE PROTEIN INSERTION EFFICIENCY FACTOR-RELATED"/>
    <property type="match status" value="1"/>
</dbReference>
<dbReference type="Pfam" id="PF01809">
    <property type="entry name" value="YidD"/>
    <property type="match status" value="1"/>
</dbReference>
<dbReference type="SMART" id="SM01234">
    <property type="entry name" value="Haemolytic"/>
    <property type="match status" value="1"/>
</dbReference>
<comment type="function">
    <text evidence="1">Could be involved in insertion of integral membrane proteins into the membrane.</text>
</comment>
<comment type="subcellular location">
    <subcellularLocation>
        <location evidence="1">Cell inner membrane</location>
        <topology evidence="1">Peripheral membrane protein</topology>
        <orientation evidence="1">Cytoplasmic side</orientation>
    </subcellularLocation>
</comment>
<comment type="similarity">
    <text evidence="1">Belongs to the UPF0161 family.</text>
</comment>